<gene>
    <name evidence="1" type="primary">clpS</name>
    <name type="ordered locus">LPC_2478</name>
</gene>
<sequence>MSRQNLEEIIQTGIADTELSTEISTAIKRPRKYKVLLLNDDYTPMDFVVEVLKHFFHLNEEVAIQVMLQVHFQGKGVCGVFTRDIAETKVALVNEYARMNQHPLLSSMEPE</sequence>
<organism>
    <name type="scientific">Legionella pneumophila (strain Corby)</name>
    <dbReference type="NCBI Taxonomy" id="400673"/>
    <lineage>
        <taxon>Bacteria</taxon>
        <taxon>Pseudomonadati</taxon>
        <taxon>Pseudomonadota</taxon>
        <taxon>Gammaproteobacteria</taxon>
        <taxon>Legionellales</taxon>
        <taxon>Legionellaceae</taxon>
        <taxon>Legionella</taxon>
    </lineage>
</organism>
<reference key="1">
    <citation type="submission" date="2006-11" db="EMBL/GenBank/DDBJ databases">
        <title>Identification and characterization of a new conjugation/ type IVA secretion system (trb/tra) of L. pneumophila Corby localized on a mobile genomic island.</title>
        <authorList>
            <person name="Gloeckner G."/>
            <person name="Albert-Weissenberger C."/>
            <person name="Weinmann E."/>
            <person name="Jacobi S."/>
            <person name="Schunder E."/>
            <person name="Steinert M."/>
            <person name="Buchrieser C."/>
            <person name="Hacker J."/>
            <person name="Heuner K."/>
        </authorList>
    </citation>
    <scope>NUCLEOTIDE SEQUENCE [LARGE SCALE GENOMIC DNA]</scope>
    <source>
        <strain>Corby</strain>
    </source>
</reference>
<protein>
    <recommendedName>
        <fullName evidence="1">ATP-dependent Clp protease adapter protein ClpS</fullName>
    </recommendedName>
</protein>
<comment type="function">
    <text evidence="1">Involved in the modulation of the specificity of the ClpAP-mediated ATP-dependent protein degradation.</text>
</comment>
<comment type="subunit">
    <text evidence="1">Binds to the N-terminal domain of the chaperone ClpA.</text>
</comment>
<comment type="similarity">
    <text evidence="1">Belongs to the ClpS family.</text>
</comment>
<name>CLPS_LEGPC</name>
<dbReference type="EMBL" id="CP000675">
    <property type="protein sequence ID" value="ABQ56397.1"/>
    <property type="molecule type" value="Genomic_DNA"/>
</dbReference>
<dbReference type="RefSeq" id="WP_011215007.1">
    <property type="nucleotide sequence ID" value="NZ_JAPMSS010000002.1"/>
</dbReference>
<dbReference type="SMR" id="A5IG97"/>
<dbReference type="KEGG" id="lpc:LPC_2478"/>
<dbReference type="HOGENOM" id="CLU_134358_2_1_6"/>
<dbReference type="GO" id="GO:0030163">
    <property type="term" value="P:protein catabolic process"/>
    <property type="evidence" value="ECO:0007669"/>
    <property type="project" value="InterPro"/>
</dbReference>
<dbReference type="GO" id="GO:0006508">
    <property type="term" value="P:proteolysis"/>
    <property type="evidence" value="ECO:0007669"/>
    <property type="project" value="UniProtKB-UniRule"/>
</dbReference>
<dbReference type="FunFam" id="3.30.1390.10:FF:000002">
    <property type="entry name" value="ATP-dependent Clp protease adapter protein ClpS"/>
    <property type="match status" value="1"/>
</dbReference>
<dbReference type="Gene3D" id="3.30.1390.10">
    <property type="match status" value="1"/>
</dbReference>
<dbReference type="HAMAP" id="MF_00302">
    <property type="entry name" value="ClpS"/>
    <property type="match status" value="1"/>
</dbReference>
<dbReference type="InterPro" id="IPR022935">
    <property type="entry name" value="ClpS"/>
</dbReference>
<dbReference type="InterPro" id="IPR003769">
    <property type="entry name" value="ClpS_core"/>
</dbReference>
<dbReference type="InterPro" id="IPR014719">
    <property type="entry name" value="Ribosomal_bL12_C/ClpS-like"/>
</dbReference>
<dbReference type="NCBIfam" id="NF000672">
    <property type="entry name" value="PRK00033.1-5"/>
    <property type="match status" value="1"/>
</dbReference>
<dbReference type="PANTHER" id="PTHR33473:SF19">
    <property type="entry name" value="ATP-DEPENDENT CLP PROTEASE ADAPTER PROTEIN CLPS"/>
    <property type="match status" value="1"/>
</dbReference>
<dbReference type="PANTHER" id="PTHR33473">
    <property type="entry name" value="ATP-DEPENDENT CLP PROTEASE ADAPTER PROTEIN CLPS1, CHLOROPLASTIC"/>
    <property type="match status" value="1"/>
</dbReference>
<dbReference type="Pfam" id="PF02617">
    <property type="entry name" value="ClpS"/>
    <property type="match status" value="1"/>
</dbReference>
<dbReference type="SUPFAM" id="SSF54736">
    <property type="entry name" value="ClpS-like"/>
    <property type="match status" value="1"/>
</dbReference>
<feature type="chain" id="PRO_1000022611" description="ATP-dependent Clp protease adapter protein ClpS">
    <location>
        <begin position="1"/>
        <end position="111"/>
    </location>
</feature>
<accession>A5IG97</accession>
<evidence type="ECO:0000255" key="1">
    <source>
        <dbReference type="HAMAP-Rule" id="MF_00302"/>
    </source>
</evidence>
<proteinExistence type="inferred from homology"/>